<organismHost>
    <name type="scientific">Mus musculus</name>
    <name type="common">Mouse</name>
    <dbReference type="NCBI Taxonomy" id="10090"/>
</organismHost>
<gene>
    <name type="primary">gag</name>
</gene>
<evidence type="ECO:0000255" key="1"/>
<evidence type="ECO:0000255" key="2">
    <source>
        <dbReference type="PROSITE-ProRule" id="PRU00047"/>
    </source>
</evidence>
<evidence type="ECO:0000256" key="3">
    <source>
        <dbReference type="SAM" id="MobiDB-lite"/>
    </source>
</evidence>
<evidence type="ECO:0000269" key="4">
    <source>
    </source>
</evidence>
<evidence type="ECO:0000269" key="5">
    <source>
    </source>
</evidence>
<evidence type="ECO:0000269" key="6">
    <source>
    </source>
</evidence>
<evidence type="ECO:0000269" key="7">
    <source>
    </source>
</evidence>
<evidence type="ECO:0000305" key="8"/>
<evidence type="ECO:0007744" key="9">
    <source>
        <dbReference type="PDB" id="4ZV5"/>
    </source>
</evidence>
<evidence type="ECO:0007829" key="10">
    <source>
        <dbReference type="PDB" id="5HYB"/>
    </source>
</evidence>
<comment type="function">
    <molecule>Matrix protein p10</molecule>
    <text evidence="8">Matrix protein.</text>
</comment>
<comment type="function">
    <molecule>Nucleocapsid protein p14</molecule>
    <text evidence="8">Binds strongly to viral nucleic acids and promotes their aggregation. Also destabilizes the nucleic acids duplexes via highly structured zinc-binding motifs.</text>
</comment>
<comment type="function">
    <molecule>Capsid protein p27</molecule>
    <text evidence="8">Capsid protein.</text>
</comment>
<comment type="subunit">
    <molecule>Matrix protein p10</molecule>
    <text evidence="6">Homodimer; when myristoylated.</text>
</comment>
<comment type="subcellular location">
    <molecule>Matrix protein p10</molecule>
    <subcellularLocation>
        <location evidence="5">Virion</location>
    </subcellularLocation>
</comment>
<comment type="subcellular location">
    <molecule>Capsid protein p27</molecule>
    <subcellularLocation>
        <location evidence="5">Virion</location>
    </subcellularLocation>
</comment>
<comment type="subcellular location">
    <molecule>Nucleocapsid protein p14</molecule>
    <subcellularLocation>
        <location evidence="5">Virion</location>
    </subcellularLocation>
</comment>
<comment type="alternative products">
    <event type="ribosomal frameshifting"/>
    <isoform>
        <id>P10258-1</id>
        <name>Gag polyprotein</name>
        <sequence type="displayed"/>
    </isoform>
    <isoform>
        <id>P10271-1</id>
        <name>Gag-Pro polyprotein</name>
        <sequence type="external"/>
    </isoform>
    <isoform>
        <id>P03365-1</id>
        <name>Gag-Pro-Pol polyprotein</name>
        <sequence type="external"/>
    </isoform>
</comment>
<comment type="domain">
    <molecule>Gag polyprotein</molecule>
    <text evidence="8">Late-budding domains (L domains) are short sequence motifs essential for viral particle release. They can occur individually or in close proximity within structural proteins. They interacts with sorting cellular proteins of the multivesicular body (MVB) pathway. Most of these proteins are class E vacuolar protein sorting factors belonging to ESCRT-I, ESCRT-II or ESCRT-III complexes. Gag-p27 contains one L domain: a PTAP/PSAP motif, which interacts with the UEV domain of TSG101.</text>
</comment>
<comment type="PTM">
    <molecule>Gag polyprotein</molecule>
    <text evidence="4">Specific enzymatic cleavages in vivo yield mature proteins.</text>
</comment>
<comment type="PTM">
    <molecule>Gag polyprotein</molecule>
    <text evidence="6">Myristoylated. Myristoylation of the matrix (MA) domain mediates the transport and binding of Gag polyproteins to the host plasma membrane and is required for the assembly of viral particles.</text>
</comment>
<comment type="miscellaneous">
    <molecule>Isoform Gag polyprotein</molecule>
    <text evidence="7">Produced by conventional translation.</text>
</comment>
<reference key="1">
    <citation type="journal article" date="1987" name="J. Virol.">
        <title>Complete nucleotide sequence of a milk-transmitted mouse mammary tumor virus: two frameshift suppression events are required for translation of gag and pol.</title>
        <authorList>
            <person name="Moore R."/>
            <person name="Dixon M."/>
            <person name="Smith R."/>
            <person name="Peters G."/>
            <person name="Dickson C."/>
        </authorList>
    </citation>
    <scope>NUCLEOTIDE SEQUENCE [GENOMIC RNA]</scope>
    <scope>RIBOSOMAL FRAMESHIFT</scope>
</reference>
<reference key="2">
    <citation type="journal article" date="1978" name="Virology">
        <title>Serological and biochemical characterization of the mouse mammary tumor virus with localization of p10.</title>
        <authorList>
            <person name="Cardiff R.D."/>
            <person name="Puentes M.J."/>
            <person name="Young L.J."/>
            <person name="Smith G.H."/>
            <person name="Teramoto Y.A."/>
            <person name="Altrock B.W."/>
            <person name="Pratt T.S."/>
        </authorList>
    </citation>
    <scope>SUBCELLULAR LOCATION (MATRIX PROTEIN P10)</scope>
    <scope>SUBCELLULAR LOCATION (CAPSID PROTEIN P27)</scope>
    <scope>SUBCELLULAR LOCATION (NUCLEOCAPSID PROTEIN P14)</scope>
</reference>
<reference key="3">
    <citation type="journal article" date="1992" name="J. Biol. Chem.">
        <title>Purification and characterization of the mouse mammary tumor virus protease expressed in Escherichia coli.</title>
        <authorList>
            <person name="Menendez-Arias L."/>
            <person name="Young M."/>
            <person name="Oroszlan S."/>
        </authorList>
    </citation>
    <scope>PROTEOLYTIC CLEAVAGE (GAG POLYPROTEIN)</scope>
</reference>
<reference evidence="9" key="4">
    <citation type="journal article" date="2016" name="Retrovirology">
        <title>Myristoylation drives dimerization of matrix protein from mouse mammary tumor virus.</title>
        <authorList>
            <person name="Dolezal M."/>
            <person name="Zabransky A."/>
            <person name="Dostal J."/>
            <person name="Vanek O."/>
            <person name="Brynda J."/>
            <person name="Lepsik M."/>
            <person name="Hadravova R."/>
            <person name="Pichova I."/>
        </authorList>
    </citation>
    <scope>X-RAY CRYSTALLOGRAPHY (1.57 ANGSTROMS) OF 2-92</scope>
    <scope>MYRISTOYLATION AT GLY-2</scope>
    <scope>SUBUNIT (MATRIX PROTEIN P10)</scope>
</reference>
<organism>
    <name type="scientific">Mouse mammary tumor virus (strain BR6)</name>
    <name type="common">MMTV</name>
    <dbReference type="NCBI Taxonomy" id="11758"/>
    <lineage>
        <taxon>Viruses</taxon>
        <taxon>Riboviria</taxon>
        <taxon>Pararnavirae</taxon>
        <taxon>Artverviricota</taxon>
        <taxon>Revtraviricetes</taxon>
        <taxon>Ortervirales</taxon>
        <taxon>Retroviridae</taxon>
        <taxon>Orthoretrovirinae</taxon>
        <taxon>Betaretrovirus</taxon>
        <taxon>Mouse mammary tumor virus</taxon>
    </lineage>
</organism>
<accession>P10258</accession>
<keyword id="KW-0002">3D-structure</keyword>
<keyword id="KW-0167">Capsid protein</keyword>
<keyword id="KW-0238">DNA-binding</keyword>
<keyword id="KW-0945">Host-virus interaction</keyword>
<keyword id="KW-0449">Lipoprotein</keyword>
<keyword id="KW-0479">Metal-binding</keyword>
<keyword id="KW-0519">Myristate</keyword>
<keyword id="KW-0547">Nucleotide-binding</keyword>
<keyword id="KW-0597">Phosphoprotein</keyword>
<keyword id="KW-1185">Reference proteome</keyword>
<keyword id="KW-0677">Repeat</keyword>
<keyword id="KW-0688">Ribosomal frameshifting</keyword>
<keyword id="KW-1198">Viral budding</keyword>
<keyword id="KW-1187">Viral budding via the host ESCRT complexes</keyword>
<keyword id="KW-0468">Viral matrix protein</keyword>
<keyword id="KW-0543">Viral nucleoprotein</keyword>
<keyword id="KW-1188">Viral release from host cell</keyword>
<keyword id="KW-0946">Virion</keyword>
<keyword id="KW-0862">Zinc</keyword>
<keyword id="KW-0863">Zinc-finger</keyword>
<sequence>MGVSGSKGQKLFVSVLQRLLSERGLHVKESSAIEFYQFLIKVSPWFPEEGGLNLQDWKRVGREMKRYAAEHGTDSIPKQAYPIWLQLREILTEQSDLVLLSAEAKSVTEEELEEGLTGLLSTSSQEKTYGTRGTAYAEIDTEVDKLSEHIYDEPYEEKEKADKNEEKDHVRKIKKVVQRKENSEGKRKEKDSKAFLATDWNDDDLSPEDWDDLEEQAAHYHDDDELILPVKRKVVKKKPQALRRKPLPPVGFAGAMAEAREKGDLTFTFPVVFMGESDEDDTPVWEPLPLKTLKELQSAVRTMGPSAPYTLQVVDMVASQWLTPSDWHQTARATLSPGDYVLWRTEYEEKSKEMVQKAAGKRKGKVSLDMLLGTGQFLSPSSQIKLSKDVLKDVTTNAVLAWRAIPPPGVKKTVLAGLKQGNEESYETFISRLEEAVYRMMPRGEGSDILIKQLAWENANSLCQDLIRPIRKTGTIQDYIRACLDASPAVVQGMAYAAAMRGQKYSTFVKQTYGGGKGGQGAEGPVCFSCGKTGHIRKDCKDEKGSKRAPPGLCPRCKKGYHWKSECKSKFDKDGNPLPPLETNAENSKNL</sequence>
<proteinExistence type="evidence at protein level"/>
<name>GAG_MMTVB</name>
<dbReference type="EMBL" id="M15122">
    <property type="protein sequence ID" value="AAA46543.1"/>
    <property type="molecule type" value="Genomic_RNA"/>
</dbReference>
<dbReference type="PIR" id="A26795">
    <property type="entry name" value="FOMVMM"/>
</dbReference>
<dbReference type="RefSeq" id="NP_056882.1">
    <property type="nucleotide sequence ID" value="NC_001503.1"/>
</dbReference>
<dbReference type="PDB" id="4ZV5">
    <property type="method" value="X-ray"/>
    <property type="resolution" value="1.57 A"/>
    <property type="chains" value="A/B=2-92"/>
</dbReference>
<dbReference type="PDB" id="5HYB">
    <property type="method" value="X-ray"/>
    <property type="resolution" value="1.94 A"/>
    <property type="chains" value="A/B=2-92"/>
</dbReference>
<dbReference type="PDB" id="5I27">
    <property type="method" value="X-ray"/>
    <property type="resolution" value="2.05 A"/>
    <property type="chains" value="A/B=6-92"/>
</dbReference>
<dbReference type="PDBsum" id="4ZV5"/>
<dbReference type="PDBsum" id="5HYB"/>
<dbReference type="PDBsum" id="5I27"/>
<dbReference type="SMR" id="P10258"/>
<dbReference type="iPTMnet" id="P10258"/>
<dbReference type="GeneID" id="1491864"/>
<dbReference type="KEGG" id="vg:1491864"/>
<dbReference type="Proteomes" id="UP000228400">
    <property type="component" value="Genome"/>
</dbReference>
<dbReference type="GO" id="GO:0019013">
    <property type="term" value="C:viral nucleocapsid"/>
    <property type="evidence" value="ECO:0007669"/>
    <property type="project" value="UniProtKB-KW"/>
</dbReference>
<dbReference type="GO" id="GO:0003677">
    <property type="term" value="F:DNA binding"/>
    <property type="evidence" value="ECO:0007669"/>
    <property type="project" value="UniProtKB-KW"/>
</dbReference>
<dbReference type="GO" id="GO:0000166">
    <property type="term" value="F:nucleotide binding"/>
    <property type="evidence" value="ECO:0007669"/>
    <property type="project" value="UniProtKB-KW"/>
</dbReference>
<dbReference type="GO" id="GO:0039660">
    <property type="term" value="F:structural constituent of virion"/>
    <property type="evidence" value="ECO:0007669"/>
    <property type="project" value="UniProtKB-KW"/>
</dbReference>
<dbReference type="GO" id="GO:0008270">
    <property type="term" value="F:zinc ion binding"/>
    <property type="evidence" value="ECO:0007669"/>
    <property type="project" value="UniProtKB-KW"/>
</dbReference>
<dbReference type="GO" id="GO:0039702">
    <property type="term" value="P:viral budding via host ESCRT complex"/>
    <property type="evidence" value="ECO:0007669"/>
    <property type="project" value="UniProtKB-KW"/>
</dbReference>
<dbReference type="GO" id="GO:0075523">
    <property type="term" value="P:viral translational frameshifting"/>
    <property type="evidence" value="ECO:0007669"/>
    <property type="project" value="UniProtKB-KW"/>
</dbReference>
<dbReference type="FunFam" id="1.10.1200.30:FF:000003">
    <property type="entry name" value="Gag polyprotein"/>
    <property type="match status" value="1"/>
</dbReference>
<dbReference type="FunFam" id="1.10.150.490:FF:000001">
    <property type="entry name" value="Gag polyprotein"/>
    <property type="match status" value="1"/>
</dbReference>
<dbReference type="FunFam" id="1.10.375.10:FF:000007">
    <property type="entry name" value="Gag polyprotein"/>
    <property type="match status" value="1"/>
</dbReference>
<dbReference type="FunFam" id="4.10.60.10:FF:000036">
    <property type="entry name" value="Gag polyprotein"/>
    <property type="match status" value="1"/>
</dbReference>
<dbReference type="Gene3D" id="1.10.1200.30">
    <property type="match status" value="1"/>
</dbReference>
<dbReference type="Gene3D" id="1.10.375.10">
    <property type="entry name" value="Human Immunodeficiency Virus Type 1 Capsid Protein"/>
    <property type="match status" value="1"/>
</dbReference>
<dbReference type="Gene3D" id="1.10.150.490">
    <property type="entry name" value="Retroviral GAG p10 protein"/>
    <property type="match status" value="1"/>
</dbReference>
<dbReference type="Gene3D" id="4.10.60.10">
    <property type="entry name" value="Zinc finger, CCHC-type"/>
    <property type="match status" value="1"/>
</dbReference>
<dbReference type="InterPro" id="IPR003322">
    <property type="entry name" value="B_retro_matrix"/>
</dbReference>
<dbReference type="InterPro" id="IPR038124">
    <property type="entry name" value="B_retro_matrix_sf"/>
</dbReference>
<dbReference type="InterPro" id="IPR045345">
    <property type="entry name" value="Gag_p24_C"/>
</dbReference>
<dbReference type="InterPro" id="IPR050195">
    <property type="entry name" value="Primate_lentivir_Gag_pol-like"/>
</dbReference>
<dbReference type="InterPro" id="IPR008916">
    <property type="entry name" value="Retrov_capsid_C"/>
</dbReference>
<dbReference type="InterPro" id="IPR008919">
    <property type="entry name" value="Retrov_capsid_N"/>
</dbReference>
<dbReference type="InterPro" id="IPR010999">
    <property type="entry name" value="Retrovr_matrix"/>
</dbReference>
<dbReference type="InterPro" id="IPR001878">
    <property type="entry name" value="Znf_CCHC"/>
</dbReference>
<dbReference type="InterPro" id="IPR036875">
    <property type="entry name" value="Znf_CCHC_sf"/>
</dbReference>
<dbReference type="PANTHER" id="PTHR40389">
    <property type="entry name" value="ENDOGENOUS RETROVIRUS GROUP K MEMBER 24 GAG POLYPROTEIN-RELATED"/>
    <property type="match status" value="1"/>
</dbReference>
<dbReference type="PANTHER" id="PTHR40389:SF3">
    <property type="entry name" value="IGE-BINDING PROTEIN"/>
    <property type="match status" value="1"/>
</dbReference>
<dbReference type="Pfam" id="PF02337">
    <property type="entry name" value="Gag_p10"/>
    <property type="match status" value="1"/>
</dbReference>
<dbReference type="Pfam" id="PF00607">
    <property type="entry name" value="Gag_p24"/>
    <property type="match status" value="1"/>
</dbReference>
<dbReference type="Pfam" id="PF19317">
    <property type="entry name" value="Gag_p24_C"/>
    <property type="match status" value="1"/>
</dbReference>
<dbReference type="Pfam" id="PF00098">
    <property type="entry name" value="zf-CCHC"/>
    <property type="match status" value="1"/>
</dbReference>
<dbReference type="Pfam" id="PF14787">
    <property type="entry name" value="zf-CCHC_5"/>
    <property type="match status" value="1"/>
</dbReference>
<dbReference type="SMART" id="SM00343">
    <property type="entry name" value="ZnF_C2HC"/>
    <property type="match status" value="2"/>
</dbReference>
<dbReference type="SUPFAM" id="SSF47836">
    <property type="entry name" value="Retroviral matrix proteins"/>
    <property type="match status" value="1"/>
</dbReference>
<dbReference type="SUPFAM" id="SSF47353">
    <property type="entry name" value="Retrovirus capsid dimerization domain-like"/>
    <property type="match status" value="1"/>
</dbReference>
<dbReference type="SUPFAM" id="SSF47943">
    <property type="entry name" value="Retrovirus capsid protein, N-terminal core domain"/>
    <property type="match status" value="1"/>
</dbReference>
<dbReference type="SUPFAM" id="SSF57756">
    <property type="entry name" value="Retrovirus zinc finger-like domains"/>
    <property type="match status" value="2"/>
</dbReference>
<dbReference type="PROSITE" id="PS50158">
    <property type="entry name" value="ZF_CCHC"/>
    <property type="match status" value="1"/>
</dbReference>
<feature type="initiator methionine" description="Removed; by host" evidence="1">
    <location>
        <position position="1"/>
    </location>
</feature>
<feature type="chain" id="PRO_0000442465" description="Gag polyprotein">
    <location>
        <begin position="2"/>
        <end position="591"/>
    </location>
</feature>
<feature type="chain" id="PRO_0000040920" description="Matrix protein p10">
    <location>
        <begin position="2"/>
        <end position="99"/>
    </location>
</feature>
<feature type="chain" id="PRO_0000040921" description="Phosphorylated protein pp21">
    <location>
        <begin position="100"/>
        <end position="195"/>
    </location>
</feature>
<feature type="chain" id="PRO_0000040922" description="Protein p3">
    <location>
        <begin position="196"/>
        <end position="228"/>
    </location>
</feature>
<feature type="chain" id="PRO_0000040923" description="Protein p8">
    <location>
        <begin position="229"/>
        <end position="254"/>
    </location>
</feature>
<feature type="chain" id="PRO_0000040924" description="Protein n">
    <location>
        <begin position="255"/>
        <end position="269"/>
    </location>
</feature>
<feature type="chain" id="PRO_0000040925" description="Capsid protein p27">
    <location>
        <begin position="270"/>
        <end position="496"/>
    </location>
</feature>
<feature type="chain" id="PRO_0000040926" description="Nucleocapsid protein p14">
    <location>
        <begin position="497"/>
        <end position="591"/>
    </location>
</feature>
<feature type="zinc finger region" description="CCHC-type 1" evidence="2">
    <location>
        <begin position="525"/>
        <end position="542"/>
    </location>
</feature>
<feature type="zinc finger region" description="CCHC-type 2" evidence="2">
    <location>
        <begin position="552"/>
        <end position="569"/>
    </location>
</feature>
<feature type="region of interest" description="Disordered" evidence="3">
    <location>
        <begin position="151"/>
        <end position="191"/>
    </location>
</feature>
<feature type="region of interest" description="Disordered" evidence="3">
    <location>
        <begin position="568"/>
        <end position="591"/>
    </location>
</feature>
<feature type="short sequence motif" description="PTAP/PSAP motif" evidence="8">
    <location>
        <begin position="305"/>
        <end position="308"/>
    </location>
</feature>
<feature type="compositionally biased region" description="Basic and acidic residues" evidence="3">
    <location>
        <begin position="151"/>
        <end position="169"/>
    </location>
</feature>
<feature type="compositionally biased region" description="Basic and acidic residues" evidence="3">
    <location>
        <begin position="178"/>
        <end position="191"/>
    </location>
</feature>
<feature type="site" description="Cleavage; by viral protease" evidence="4">
    <location>
        <begin position="99"/>
        <end position="100"/>
    </location>
</feature>
<feature type="site" description="Cleavage; by viral protease" evidence="4">
    <location>
        <begin position="195"/>
        <end position="196"/>
    </location>
</feature>
<feature type="site" description="Cleavage; by viral protease" evidence="4">
    <location>
        <begin position="228"/>
        <end position="229"/>
    </location>
</feature>
<feature type="site" description="Cleavage; by viral protease" evidence="4">
    <location>
        <begin position="254"/>
        <end position="255"/>
    </location>
</feature>
<feature type="site" description="Cleavage; by viral protease" evidence="4">
    <location>
        <begin position="269"/>
        <end position="270"/>
    </location>
</feature>
<feature type="site" description="Cleavage; by viral protease" evidence="4">
    <location>
        <begin position="496"/>
        <end position="497"/>
    </location>
</feature>
<feature type="lipid moiety-binding region" description="N-myristoyl glycine; by host" evidence="6">
    <location>
        <position position="2"/>
    </location>
</feature>
<feature type="turn" evidence="10">
    <location>
        <begin position="5"/>
        <end position="8"/>
    </location>
</feature>
<feature type="helix" evidence="10">
    <location>
        <begin position="9"/>
        <end position="21"/>
    </location>
</feature>
<feature type="turn" evidence="10">
    <location>
        <begin position="22"/>
        <end position="24"/>
    </location>
</feature>
<feature type="helix" evidence="10">
    <location>
        <begin position="29"/>
        <end position="42"/>
    </location>
</feature>
<feature type="helix" evidence="10">
    <location>
        <begin position="45"/>
        <end position="49"/>
    </location>
</feature>
<feature type="helix" evidence="10">
    <location>
        <begin position="54"/>
        <end position="71"/>
    </location>
</feature>
<feature type="helix" evidence="10">
    <location>
        <begin position="73"/>
        <end position="75"/>
    </location>
</feature>
<feature type="helix" evidence="10">
    <location>
        <begin position="80"/>
        <end position="90"/>
    </location>
</feature>
<protein>
    <recommendedName>
        <fullName>Gag polyprotein</fullName>
    </recommendedName>
    <component>
        <recommendedName>
            <fullName>Matrix protein p10</fullName>
        </recommendedName>
    </component>
    <component>
        <recommendedName>
            <fullName>Phosphorylated protein pp21</fullName>
        </recommendedName>
    </component>
    <component>
        <recommendedName>
            <fullName>Protein p3</fullName>
        </recommendedName>
    </component>
    <component>
        <recommendedName>
            <fullName>Protein p8</fullName>
        </recommendedName>
    </component>
    <component>
        <recommendedName>
            <fullName>Protein n</fullName>
        </recommendedName>
    </component>
    <component>
        <recommendedName>
            <fullName>Capsid protein p27</fullName>
        </recommendedName>
    </component>
    <component>
        <recommendedName>
            <fullName>Nucleocapsid protein p14</fullName>
        </recommendedName>
    </component>
</protein>